<comment type="function">
    <text evidence="1">Component of the EKC/KEOPS complex that is required for the formation of a threonylcarbamoyl group on adenosine at position 37 (t(6)A37) in tRNAs that read codons beginning with adenine. The complex is probably involved in the transfer of the threonylcarbamoyl moiety of threonylcarbamoyl-AMP (TC-AMP) to the N6 group of A37. Tprkb acts as an allosteric effector that regulates the t(6)A activity of the complex.</text>
</comment>
<comment type="subunit">
    <text evidence="1">Component of the EKC/KEOPS complex.</text>
</comment>
<comment type="subcellular location">
    <subcellularLocation>
        <location evidence="1">Cytoplasm</location>
        <location evidence="1">Cytosol</location>
    </subcellularLocation>
    <subcellularLocation>
        <location evidence="1">Nucleus</location>
    </subcellularLocation>
</comment>
<comment type="disruption phenotype">
    <text evidence="2 3">Embryos display primary microcephaly, leading to early lethality (PubMed:28805828, PubMed:29346415). Marked apoptosis is observed in the brain (telencephalon) (PubMed:28805828). Fishes do not show a renal phenotype, possibly as a result of early lethality (PubMed:28805828).</text>
</comment>
<comment type="similarity">
    <text evidence="4">Belongs to the CGI121/TPRKB family.</text>
</comment>
<keyword id="KW-0963">Cytoplasm</keyword>
<keyword id="KW-0539">Nucleus</keyword>
<keyword id="KW-1185">Reference proteome</keyword>
<keyword id="KW-0819">tRNA processing</keyword>
<organism>
    <name type="scientific">Danio rerio</name>
    <name type="common">Zebrafish</name>
    <name type="synonym">Brachydanio rerio</name>
    <dbReference type="NCBI Taxonomy" id="7955"/>
    <lineage>
        <taxon>Eukaryota</taxon>
        <taxon>Metazoa</taxon>
        <taxon>Chordata</taxon>
        <taxon>Craniata</taxon>
        <taxon>Vertebrata</taxon>
        <taxon>Euteleostomi</taxon>
        <taxon>Actinopterygii</taxon>
        <taxon>Neopterygii</taxon>
        <taxon>Teleostei</taxon>
        <taxon>Ostariophysi</taxon>
        <taxon>Cypriniformes</taxon>
        <taxon>Danionidae</taxon>
        <taxon>Danioninae</taxon>
        <taxon>Danio</taxon>
    </lineage>
</organism>
<feature type="chain" id="PRO_0000444044" description="EKC/KEOPS complex subunit TPRKB">
    <location>
        <begin position="1"/>
        <end position="175"/>
    </location>
</feature>
<feature type="sequence conflict" description="In Ref. 2; AAH85466." evidence="4" ref="2">
    <original>H</original>
    <variation>P</variation>
    <location>
        <position position="11"/>
    </location>
</feature>
<feature type="sequence conflict" description="In Ref. 2; AAH85466." evidence="4" ref="2">
    <original>G</original>
    <variation>R</variation>
    <location>
        <position position="68"/>
    </location>
</feature>
<feature type="sequence conflict" description="In Ref. 2; AAH85466." evidence="4" ref="2">
    <original>G</original>
    <variation>F</variation>
    <location>
        <position position="134"/>
    </location>
</feature>
<evidence type="ECO:0000250" key="1">
    <source>
        <dbReference type="UniProtKB" id="Q9Y3C4"/>
    </source>
</evidence>
<evidence type="ECO:0000269" key="2">
    <source>
    </source>
</evidence>
<evidence type="ECO:0000269" key="3">
    <source>
    </source>
</evidence>
<evidence type="ECO:0000305" key="4"/>
<evidence type="ECO:0000312" key="5">
    <source>
        <dbReference type="ZFIN" id="ZDB-GENE-041114-68"/>
    </source>
</evidence>
<protein>
    <recommendedName>
        <fullName evidence="4">EKC/KEOPS complex subunit TPRKB</fullName>
    </recommendedName>
    <alternativeName>
        <fullName evidence="1">PRPK-binding protein</fullName>
    </alternativeName>
    <alternativeName>
        <fullName evidence="1">TP53RK-binding protein</fullName>
    </alternativeName>
</protein>
<accession>F1QZ15</accession>
<accession>Q5U3M9</accession>
<dbReference type="EMBL" id="CU855579">
    <property type="status" value="NOT_ANNOTATED_CDS"/>
    <property type="molecule type" value="Genomic_DNA"/>
</dbReference>
<dbReference type="EMBL" id="BC085466">
    <property type="protein sequence ID" value="AAH85466.1"/>
    <property type="molecule type" value="mRNA"/>
</dbReference>
<dbReference type="RefSeq" id="NP_001007374.1">
    <property type="nucleotide sequence ID" value="NM_001007373.1"/>
</dbReference>
<dbReference type="SMR" id="F1QZ15"/>
<dbReference type="FunCoup" id="F1QZ15">
    <property type="interactions" value="1787"/>
</dbReference>
<dbReference type="STRING" id="7955.ENSDARP00000056131"/>
<dbReference type="PaxDb" id="7955-ENSDARP00000056131"/>
<dbReference type="Ensembl" id="ENSDART00000056132">
    <property type="protein sequence ID" value="ENSDARP00000056131"/>
    <property type="gene ID" value="ENSDARG00000014941"/>
</dbReference>
<dbReference type="GeneID" id="492501"/>
<dbReference type="KEGG" id="dre:492501"/>
<dbReference type="AGR" id="ZFIN:ZDB-GENE-041114-68"/>
<dbReference type="CTD" id="51002"/>
<dbReference type="ZFIN" id="ZDB-GENE-041114-68">
    <property type="gene designation" value="tprkb"/>
</dbReference>
<dbReference type="eggNOG" id="KOG4066">
    <property type="taxonomic scope" value="Eukaryota"/>
</dbReference>
<dbReference type="HOGENOM" id="CLU_065847_2_0_1"/>
<dbReference type="InParanoid" id="F1QZ15"/>
<dbReference type="OrthoDB" id="329139at2759"/>
<dbReference type="PhylomeDB" id="F1QZ15"/>
<dbReference type="TreeFam" id="TF315098"/>
<dbReference type="PRO" id="PR:F1QZ15"/>
<dbReference type="Proteomes" id="UP000000437">
    <property type="component" value="Chromosome 4"/>
</dbReference>
<dbReference type="Bgee" id="ENSDARG00000014941">
    <property type="expression patterns" value="Expressed in testis and 20 other cell types or tissues"/>
</dbReference>
<dbReference type="ExpressionAtlas" id="F1QZ15">
    <property type="expression patterns" value="baseline"/>
</dbReference>
<dbReference type="GO" id="GO:0005737">
    <property type="term" value="C:cytoplasm"/>
    <property type="evidence" value="ECO:0000250"/>
    <property type="project" value="UniProtKB"/>
</dbReference>
<dbReference type="GO" id="GO:0005829">
    <property type="term" value="C:cytosol"/>
    <property type="evidence" value="ECO:0000318"/>
    <property type="project" value="GO_Central"/>
</dbReference>
<dbReference type="GO" id="GO:0000408">
    <property type="term" value="C:EKC/KEOPS complex"/>
    <property type="evidence" value="ECO:0000250"/>
    <property type="project" value="UniProtKB"/>
</dbReference>
<dbReference type="GO" id="GO:0005634">
    <property type="term" value="C:nucleus"/>
    <property type="evidence" value="ECO:0000250"/>
    <property type="project" value="UniProtKB"/>
</dbReference>
<dbReference type="GO" id="GO:0002949">
    <property type="term" value="P:tRNA threonylcarbamoyladenosine modification"/>
    <property type="evidence" value="ECO:0000250"/>
    <property type="project" value="UniProtKB"/>
</dbReference>
<dbReference type="FunFam" id="3.30.2380.10:FF:000001">
    <property type="entry name" value="EKC/KEOPS complex subunit TPRKB"/>
    <property type="match status" value="1"/>
</dbReference>
<dbReference type="Gene3D" id="3.30.2380.10">
    <property type="entry name" value="CGI121/TPRKB"/>
    <property type="match status" value="1"/>
</dbReference>
<dbReference type="InterPro" id="IPR013926">
    <property type="entry name" value="CGI121/TPRKB"/>
</dbReference>
<dbReference type="InterPro" id="IPR036504">
    <property type="entry name" value="CGI121/TPRKB_sf"/>
</dbReference>
<dbReference type="NCBIfam" id="NF011465">
    <property type="entry name" value="PRK14886.1-1"/>
    <property type="match status" value="1"/>
</dbReference>
<dbReference type="PANTHER" id="PTHR15840">
    <property type="entry name" value="CGI-121 FAMILY MEMBER"/>
    <property type="match status" value="1"/>
</dbReference>
<dbReference type="PANTHER" id="PTHR15840:SF10">
    <property type="entry name" value="EKC_KEOPS COMPLEX SUBUNIT TPRKB"/>
    <property type="match status" value="1"/>
</dbReference>
<dbReference type="Pfam" id="PF08617">
    <property type="entry name" value="CGI-121"/>
    <property type="match status" value="1"/>
</dbReference>
<dbReference type="SUPFAM" id="SSF143870">
    <property type="entry name" value="PF0523-like"/>
    <property type="match status" value="1"/>
</dbReference>
<gene>
    <name evidence="5" type="primary">tprkb</name>
</gene>
<reference key="1">
    <citation type="journal article" date="2013" name="Nature">
        <title>The zebrafish reference genome sequence and its relationship to the human genome.</title>
        <authorList>
            <person name="Howe K."/>
            <person name="Clark M.D."/>
            <person name="Torroja C.F."/>
            <person name="Torrance J."/>
            <person name="Berthelot C."/>
            <person name="Muffato M."/>
            <person name="Collins J.E."/>
            <person name="Humphray S."/>
            <person name="McLaren K."/>
            <person name="Matthews L."/>
            <person name="McLaren S."/>
            <person name="Sealy I."/>
            <person name="Caccamo M."/>
            <person name="Churcher C."/>
            <person name="Scott C."/>
            <person name="Barrett J.C."/>
            <person name="Koch R."/>
            <person name="Rauch G.J."/>
            <person name="White S."/>
            <person name="Chow W."/>
            <person name="Kilian B."/>
            <person name="Quintais L.T."/>
            <person name="Guerra-Assuncao J.A."/>
            <person name="Zhou Y."/>
            <person name="Gu Y."/>
            <person name="Yen J."/>
            <person name="Vogel J.H."/>
            <person name="Eyre T."/>
            <person name="Redmond S."/>
            <person name="Banerjee R."/>
            <person name="Chi J."/>
            <person name="Fu B."/>
            <person name="Langley E."/>
            <person name="Maguire S.F."/>
            <person name="Laird G.K."/>
            <person name="Lloyd D."/>
            <person name="Kenyon E."/>
            <person name="Donaldson S."/>
            <person name="Sehra H."/>
            <person name="Almeida-King J."/>
            <person name="Loveland J."/>
            <person name="Trevanion S."/>
            <person name="Jones M."/>
            <person name="Quail M."/>
            <person name="Willey D."/>
            <person name="Hunt A."/>
            <person name="Burton J."/>
            <person name="Sims S."/>
            <person name="McLay K."/>
            <person name="Plumb B."/>
            <person name="Davis J."/>
            <person name="Clee C."/>
            <person name="Oliver K."/>
            <person name="Clark R."/>
            <person name="Riddle C."/>
            <person name="Elliot D."/>
            <person name="Threadgold G."/>
            <person name="Harden G."/>
            <person name="Ware D."/>
            <person name="Begum S."/>
            <person name="Mortimore B."/>
            <person name="Kerry G."/>
            <person name="Heath P."/>
            <person name="Phillimore B."/>
            <person name="Tracey A."/>
            <person name="Corby N."/>
            <person name="Dunn M."/>
            <person name="Johnson C."/>
            <person name="Wood J."/>
            <person name="Clark S."/>
            <person name="Pelan S."/>
            <person name="Griffiths G."/>
            <person name="Smith M."/>
            <person name="Glithero R."/>
            <person name="Howden P."/>
            <person name="Barker N."/>
            <person name="Lloyd C."/>
            <person name="Stevens C."/>
            <person name="Harley J."/>
            <person name="Holt K."/>
            <person name="Panagiotidis G."/>
            <person name="Lovell J."/>
            <person name="Beasley H."/>
            <person name="Henderson C."/>
            <person name="Gordon D."/>
            <person name="Auger K."/>
            <person name="Wright D."/>
            <person name="Collins J."/>
            <person name="Raisen C."/>
            <person name="Dyer L."/>
            <person name="Leung K."/>
            <person name="Robertson L."/>
            <person name="Ambridge K."/>
            <person name="Leongamornlert D."/>
            <person name="McGuire S."/>
            <person name="Gilderthorp R."/>
            <person name="Griffiths C."/>
            <person name="Manthravadi D."/>
            <person name="Nichol S."/>
            <person name="Barker G."/>
            <person name="Whitehead S."/>
            <person name="Kay M."/>
            <person name="Brown J."/>
            <person name="Murnane C."/>
            <person name="Gray E."/>
            <person name="Humphries M."/>
            <person name="Sycamore N."/>
            <person name="Barker D."/>
            <person name="Saunders D."/>
            <person name="Wallis J."/>
            <person name="Babbage A."/>
            <person name="Hammond S."/>
            <person name="Mashreghi-Mohammadi M."/>
            <person name="Barr L."/>
            <person name="Martin S."/>
            <person name="Wray P."/>
            <person name="Ellington A."/>
            <person name="Matthews N."/>
            <person name="Ellwood M."/>
            <person name="Woodmansey R."/>
            <person name="Clark G."/>
            <person name="Cooper J."/>
            <person name="Tromans A."/>
            <person name="Grafham D."/>
            <person name="Skuce C."/>
            <person name="Pandian R."/>
            <person name="Andrews R."/>
            <person name="Harrison E."/>
            <person name="Kimberley A."/>
            <person name="Garnett J."/>
            <person name="Fosker N."/>
            <person name="Hall R."/>
            <person name="Garner P."/>
            <person name="Kelly D."/>
            <person name="Bird C."/>
            <person name="Palmer S."/>
            <person name="Gehring I."/>
            <person name="Berger A."/>
            <person name="Dooley C.M."/>
            <person name="Ersan-Urun Z."/>
            <person name="Eser C."/>
            <person name="Geiger H."/>
            <person name="Geisler M."/>
            <person name="Karotki L."/>
            <person name="Kirn A."/>
            <person name="Konantz J."/>
            <person name="Konantz M."/>
            <person name="Oberlander M."/>
            <person name="Rudolph-Geiger S."/>
            <person name="Teucke M."/>
            <person name="Lanz C."/>
            <person name="Raddatz G."/>
            <person name="Osoegawa K."/>
            <person name="Zhu B."/>
            <person name="Rapp A."/>
            <person name="Widaa S."/>
            <person name="Langford C."/>
            <person name="Yang F."/>
            <person name="Schuster S.C."/>
            <person name="Carter N.P."/>
            <person name="Harrow J."/>
            <person name="Ning Z."/>
            <person name="Herrero J."/>
            <person name="Searle S.M."/>
            <person name="Enright A."/>
            <person name="Geisler R."/>
            <person name="Plasterk R.H."/>
            <person name="Lee C."/>
            <person name="Westerfield M."/>
            <person name="de Jong P.J."/>
            <person name="Zon L.I."/>
            <person name="Postlethwait J.H."/>
            <person name="Nusslein-Volhard C."/>
            <person name="Hubbard T.J."/>
            <person name="Roest Crollius H."/>
            <person name="Rogers J."/>
            <person name="Stemple D.L."/>
        </authorList>
    </citation>
    <scope>NUCLEOTIDE SEQUENCE [LARGE SCALE GENOMIC DNA]</scope>
    <source>
        <strain>Tuebingen</strain>
    </source>
</reference>
<reference key="2">
    <citation type="submission" date="2004-11" db="EMBL/GenBank/DDBJ databases">
        <authorList>
            <consortium name="NIH - Zebrafish Gene Collection (ZGC) project"/>
        </authorList>
    </citation>
    <scope>NUCLEOTIDE SEQUENCE [LARGE SCALE MRNA]</scope>
    <source>
        <tissue>Larva</tissue>
    </source>
</reference>
<reference key="3">
    <citation type="journal article" date="2018" name="PLoS ONE">
        <title>Acute multi-sgRNA knockdown of KEOPS complex genes reproduces the microcephaly phenotype of the stable knockout zebrafish model.</title>
        <authorList>
            <person name="Jobst-Schwan T."/>
            <person name="Schmidt J.M."/>
            <person name="Schneider R."/>
            <person name="Hoogstraten C.A."/>
            <person name="Ullmann J.F.P."/>
            <person name="Schapiro D."/>
            <person name="Majmundar A.J."/>
            <person name="Kolb A."/>
            <person name="Eddy K."/>
            <person name="Shril S."/>
            <person name="Braun D.A."/>
            <person name="Poduri A."/>
            <person name="Hildebrandt F."/>
        </authorList>
    </citation>
    <scope>DISRUPTION PHENOTYPE</scope>
</reference>
<reference key="4">
    <citation type="journal article" date="2017" name="Nat. Genet.">
        <title>Mutations in KEOPS-complex genes cause nephrotic syndrome with primary microcephaly.</title>
        <authorList>
            <person name="Braun D.A."/>
            <person name="Rao J."/>
            <person name="Mollet G."/>
            <person name="Schapiro D."/>
            <person name="Daugeron M.C."/>
            <person name="Tan W."/>
            <person name="Gribouval O."/>
            <person name="Boyer O."/>
            <person name="Revy P."/>
            <person name="Jobst-Schwan T."/>
            <person name="Schmidt J.M."/>
            <person name="Lawson J.A."/>
            <person name="Schanze D."/>
            <person name="Ashraf S."/>
            <person name="Ullmann J.F.P."/>
            <person name="Hoogstraten C.A."/>
            <person name="Boddaert N."/>
            <person name="Collinet B."/>
            <person name="Martin G."/>
            <person name="Liger D."/>
            <person name="Lovric S."/>
            <person name="Furlano M."/>
            <person name="Guerrera I.C."/>
            <person name="Sanchez-Ferras O."/>
            <person name="Hu J.F."/>
            <person name="Boschat A.C."/>
            <person name="Sanquer S."/>
            <person name="Menten B."/>
            <person name="Vergult S."/>
            <person name="De Rocker N."/>
            <person name="Airik M."/>
            <person name="Hermle T."/>
            <person name="Shril S."/>
            <person name="Widmeier E."/>
            <person name="Gee H.Y."/>
            <person name="Choi W.I."/>
            <person name="Sadowski C.E."/>
            <person name="Pabst W.L."/>
            <person name="Warejko J.K."/>
            <person name="Daga A."/>
            <person name="Basta T."/>
            <person name="Matejas V."/>
            <person name="Scharmann K."/>
            <person name="Kienast S.D."/>
            <person name="Behnam B."/>
            <person name="Beeson B."/>
            <person name="Begtrup A."/>
            <person name="Bruce M."/>
            <person name="Ch'ng G.S."/>
            <person name="Lin S.P."/>
            <person name="Chang J.H."/>
            <person name="Chen C.H."/>
            <person name="Cho M.T."/>
            <person name="Gaffney P.M."/>
            <person name="Gipson P.E."/>
            <person name="Hsu C.H."/>
            <person name="Kari J.A."/>
            <person name="Ke Y.Y."/>
            <person name="Kiraly-Borri C."/>
            <person name="Lai W.M."/>
            <person name="Lemyre E."/>
            <person name="Littlejohn R.O."/>
            <person name="Masri A."/>
            <person name="Moghtaderi M."/>
            <person name="Nakamura K."/>
            <person name="Ozaltin F."/>
            <person name="Praet M."/>
            <person name="Prasad C."/>
            <person name="Prytula A."/>
            <person name="Roeder E.R."/>
            <person name="Rump P."/>
            <person name="Schnur R.E."/>
            <person name="Shiihara T."/>
            <person name="Sinha M.D."/>
            <person name="Soliman N.A."/>
            <person name="Soulami K."/>
            <person name="Sweetser D.A."/>
            <person name="Tsai W.H."/>
            <person name="Tsai J.D."/>
            <person name="Topaloglu R."/>
            <person name="Vester U."/>
            <person name="Viskochil D.H."/>
            <person name="Vatanavicharn N."/>
            <person name="Waxler J.L."/>
            <person name="Wierenga K.J."/>
            <person name="Wolf M.T.F."/>
            <person name="Wong S.N."/>
            <person name="Leidel S.A."/>
            <person name="Truglio G."/>
            <person name="Dedon P.C."/>
            <person name="Poduri A."/>
            <person name="Mane S."/>
            <person name="Lifton R.P."/>
            <person name="Bouchard M."/>
            <person name="Kannu P."/>
            <person name="Chitayat D."/>
            <person name="Magen D."/>
            <person name="Callewaert B."/>
            <person name="van Tilbeurgh H."/>
            <person name="Zenker M."/>
            <person name="Antignac C."/>
            <person name="Hildebrandt F."/>
        </authorList>
    </citation>
    <scope>DISRUPTION PHENOTYPE</scope>
</reference>
<name>TPRKB_DANRE</name>
<sequence>MYLTQDLELFHEYTVTQLLFKDVKNATELRKMAVNGEIKGALINPSMVVDAFQILVATNKAVHLHKIGKMKTRSLYSEIIFNLSPTNNISEAFKRFGISDSDTAVHIVLVHNKEETLNIDDIISKVDGQQIDVGQVSEMTDTAKIKKLYKITPQEDKCGTLLDAVVCRMAIKDVA</sequence>
<proteinExistence type="evidence at transcript level"/>